<dbReference type="EMBL" id="AE004092">
    <property type="protein sequence ID" value="AAK33326.1"/>
    <property type="molecule type" value="Genomic_DNA"/>
</dbReference>
<dbReference type="EMBL" id="CP000017">
    <property type="protein sequence ID" value="AAZ50830.1"/>
    <property type="molecule type" value="Genomic_DNA"/>
</dbReference>
<dbReference type="RefSeq" id="NP_268605.1">
    <property type="nucleotide sequence ID" value="NC_002737.2"/>
</dbReference>
<dbReference type="SMR" id="P66258"/>
<dbReference type="PaxDb" id="1314-HKU360_00251"/>
<dbReference type="KEGG" id="spy:SPy_0250"/>
<dbReference type="KEGG" id="spz:M5005_Spy0211"/>
<dbReference type="PATRIC" id="fig|160490.10.peg.219"/>
<dbReference type="HOGENOM" id="CLU_129938_2_0_9"/>
<dbReference type="PRO" id="PR:P66258"/>
<dbReference type="Proteomes" id="UP000000750">
    <property type="component" value="Chromosome"/>
</dbReference>
<dbReference type="GO" id="GO:1990904">
    <property type="term" value="C:ribonucleoprotein complex"/>
    <property type="evidence" value="ECO:0007669"/>
    <property type="project" value="UniProtKB-KW"/>
</dbReference>
<dbReference type="GO" id="GO:0005840">
    <property type="term" value="C:ribosome"/>
    <property type="evidence" value="ECO:0007669"/>
    <property type="project" value="UniProtKB-KW"/>
</dbReference>
<dbReference type="GO" id="GO:0003735">
    <property type="term" value="F:structural constituent of ribosome"/>
    <property type="evidence" value="ECO:0007669"/>
    <property type="project" value="InterPro"/>
</dbReference>
<dbReference type="GO" id="GO:0006412">
    <property type="term" value="P:translation"/>
    <property type="evidence" value="ECO:0007669"/>
    <property type="project" value="UniProtKB-UniRule"/>
</dbReference>
<dbReference type="FunFam" id="1.10.287.3980:FF:000001">
    <property type="entry name" value="Mitochondrial ribosomal protein L34"/>
    <property type="match status" value="1"/>
</dbReference>
<dbReference type="Gene3D" id="1.10.287.3980">
    <property type="match status" value="1"/>
</dbReference>
<dbReference type="HAMAP" id="MF_00391">
    <property type="entry name" value="Ribosomal_bL34"/>
    <property type="match status" value="1"/>
</dbReference>
<dbReference type="InterPro" id="IPR000271">
    <property type="entry name" value="Ribosomal_bL34"/>
</dbReference>
<dbReference type="InterPro" id="IPR020939">
    <property type="entry name" value="Ribosomal_bL34_CS"/>
</dbReference>
<dbReference type="NCBIfam" id="TIGR01030">
    <property type="entry name" value="rpmH_bact"/>
    <property type="match status" value="1"/>
</dbReference>
<dbReference type="PANTHER" id="PTHR14503:SF4">
    <property type="entry name" value="LARGE RIBOSOMAL SUBUNIT PROTEIN BL34M"/>
    <property type="match status" value="1"/>
</dbReference>
<dbReference type="PANTHER" id="PTHR14503">
    <property type="entry name" value="MITOCHONDRIAL RIBOSOMAL PROTEIN 34 FAMILY MEMBER"/>
    <property type="match status" value="1"/>
</dbReference>
<dbReference type="Pfam" id="PF00468">
    <property type="entry name" value="Ribosomal_L34"/>
    <property type="match status" value="1"/>
</dbReference>
<dbReference type="PROSITE" id="PS00784">
    <property type="entry name" value="RIBOSOMAL_L34"/>
    <property type="match status" value="1"/>
</dbReference>
<protein>
    <recommendedName>
        <fullName evidence="1">Large ribosomal subunit protein bL34</fullName>
    </recommendedName>
    <alternativeName>
        <fullName evidence="3">50S ribosomal protein L34</fullName>
    </alternativeName>
</protein>
<sequence>MKRTYQPSKIRRQRKHGFRHRMSTKNGRRVLAARRRKGRKVLSA</sequence>
<name>RL34_STRP1</name>
<evidence type="ECO:0000255" key="1">
    <source>
        <dbReference type="HAMAP-Rule" id="MF_00391"/>
    </source>
</evidence>
<evidence type="ECO:0000256" key="2">
    <source>
        <dbReference type="SAM" id="MobiDB-lite"/>
    </source>
</evidence>
<evidence type="ECO:0000305" key="3"/>
<reference key="1">
    <citation type="journal article" date="2001" name="Proc. Natl. Acad. Sci. U.S.A.">
        <title>Complete genome sequence of an M1 strain of Streptococcus pyogenes.</title>
        <authorList>
            <person name="Ferretti J.J."/>
            <person name="McShan W.M."/>
            <person name="Ajdic D.J."/>
            <person name="Savic D.J."/>
            <person name="Savic G."/>
            <person name="Lyon K."/>
            <person name="Primeaux C."/>
            <person name="Sezate S."/>
            <person name="Suvorov A.N."/>
            <person name="Kenton S."/>
            <person name="Lai H.S."/>
            <person name="Lin S.P."/>
            <person name="Qian Y."/>
            <person name="Jia H.G."/>
            <person name="Najar F.Z."/>
            <person name="Ren Q."/>
            <person name="Zhu H."/>
            <person name="Song L."/>
            <person name="White J."/>
            <person name="Yuan X."/>
            <person name="Clifton S.W."/>
            <person name="Roe B.A."/>
            <person name="McLaughlin R.E."/>
        </authorList>
    </citation>
    <scope>NUCLEOTIDE SEQUENCE [LARGE SCALE GENOMIC DNA]</scope>
    <source>
        <strain>ATCC 700294 / SF370 / Serotype M1</strain>
    </source>
</reference>
<reference key="2">
    <citation type="journal article" date="2005" name="J. Infect. Dis.">
        <title>Evolutionary origin and emergence of a highly successful clone of serotype M1 group A Streptococcus involved multiple horizontal gene transfer events.</title>
        <authorList>
            <person name="Sumby P."/>
            <person name="Porcella S.F."/>
            <person name="Madrigal A.G."/>
            <person name="Barbian K.D."/>
            <person name="Virtaneva K."/>
            <person name="Ricklefs S.M."/>
            <person name="Sturdevant D.E."/>
            <person name="Graham M.R."/>
            <person name="Vuopio-Varkila J."/>
            <person name="Hoe N.P."/>
            <person name="Musser J.M."/>
        </authorList>
    </citation>
    <scope>NUCLEOTIDE SEQUENCE [LARGE SCALE GENOMIC DNA]</scope>
    <source>
        <strain>ATCC BAA-947 / MGAS5005 / Serotype M1</strain>
    </source>
</reference>
<organism>
    <name type="scientific">Streptococcus pyogenes serotype M1</name>
    <dbReference type="NCBI Taxonomy" id="301447"/>
    <lineage>
        <taxon>Bacteria</taxon>
        <taxon>Bacillati</taxon>
        <taxon>Bacillota</taxon>
        <taxon>Bacilli</taxon>
        <taxon>Lactobacillales</taxon>
        <taxon>Streptococcaceae</taxon>
        <taxon>Streptococcus</taxon>
    </lineage>
</organism>
<feature type="chain" id="PRO_0000187476" description="Large ribosomal subunit protein bL34">
    <location>
        <begin position="1"/>
        <end position="44"/>
    </location>
</feature>
<feature type="region of interest" description="Disordered" evidence="2">
    <location>
        <begin position="1"/>
        <end position="44"/>
    </location>
</feature>
<gene>
    <name evidence="1" type="primary">rpmH</name>
    <name type="ordered locus">SPy_0250</name>
    <name type="ordered locus">M5005_Spy0211</name>
</gene>
<accession>P66258</accession>
<accession>Q490Y8</accession>
<accession>Q9A1J1</accession>
<keyword id="KW-1185">Reference proteome</keyword>
<keyword id="KW-0687">Ribonucleoprotein</keyword>
<keyword id="KW-0689">Ribosomal protein</keyword>
<proteinExistence type="inferred from homology"/>
<comment type="similarity">
    <text evidence="1">Belongs to the bacterial ribosomal protein bL34 family.</text>
</comment>